<sequence>MKPEDFRASTQRPFTGEEYLKSLQDGREIYIYGERVKDVTTHPAFRNAAASVAQLYDALHKPEMQDSLCWNTDTGSGGYTHKFFRVAKSADDLRHERDAIAEWSRLSYGWMGRTPDYKAAFGCALGGTPGFYGQFEQNARNWYTRIQETGLYFNHAIVNPPIDRHLPTDKVKDVYIKLEKETDAGIIVSGAKVVATNSALTHYNMIGFGSAQVMGENPDFALMFVAPMDADGVKLISRASYEMVAGATGSPYDYPLSSRFDENDAILVMDNVLIPWENVLLYRDFDRCRRWTMEGGFARMYPLQACVRLAVKLDFITALLKKSLECTGTLEFRGVQADLGEVVAWRNTFWALSDSMCSEATPWVNGAYLPDHAALQTYRVLAPMAYAKIKNIIERNVTSGLIYLPSSARDLNNPQIDQYLAKYVRGSNGMDHVQRIKILKLMWDAIGSEFGGRHELYEINYSGSQDEIRLQCLRQAQSSGNMDKMMAMVDRCLSEYDQNGWTVPHLHNNDDINMLDKLLK</sequence>
<organism>
    <name type="scientific">Escherichia coli</name>
    <dbReference type="NCBI Taxonomy" id="562"/>
    <lineage>
        <taxon>Bacteria</taxon>
        <taxon>Pseudomonadati</taxon>
        <taxon>Pseudomonadota</taxon>
        <taxon>Gammaproteobacteria</taxon>
        <taxon>Enterobacterales</taxon>
        <taxon>Enterobacteriaceae</taxon>
        <taxon>Escherichia</taxon>
    </lineage>
</organism>
<name>HPAB_ECOLX</name>
<comment type="function">
    <text evidence="1">Utilizes FADH(2) supplied by HpaC or by another flavin reductase, to catalyze the hydroxylation of 4-hydroxyphenylacetic acid, leading to the production of 3,4-DHPA. Can also oxidize phenol to catechol, and hydroxylate other phenol derivatives.</text>
</comment>
<comment type="catalytic activity">
    <reaction evidence="1">
        <text>4-hydroxyphenylacetate + FADH2 + O2 = 3,4-dihydroxyphenylacetate + FAD + H2O + H(+)</text>
        <dbReference type="Rhea" id="RHEA:30595"/>
        <dbReference type="ChEBI" id="CHEBI:15377"/>
        <dbReference type="ChEBI" id="CHEBI:15378"/>
        <dbReference type="ChEBI" id="CHEBI:15379"/>
        <dbReference type="ChEBI" id="CHEBI:17612"/>
        <dbReference type="ChEBI" id="CHEBI:48999"/>
        <dbReference type="ChEBI" id="CHEBI:57692"/>
        <dbReference type="ChEBI" id="CHEBI:58307"/>
        <dbReference type="EC" id="1.14.14.9"/>
    </reaction>
</comment>
<comment type="pathway">
    <text>Aromatic compound metabolism; 4-hydroxyphenylacetate degradation; pyruvate and succinate semialdehyde from 4-hydroxyphenylacetate: step 1/7.</text>
</comment>
<comment type="subunit">
    <text>4-HPA 3-monooxygenase consists of a reductase component HpaC and an oxygenase component HpaB.</text>
</comment>
<comment type="induction">
    <text>By 4-hydroxyphenylacetic acid.</text>
</comment>
<comment type="miscellaneous">
    <text>E.coli K12 lacks the oxygenase component HpaB.</text>
</comment>
<comment type="similarity">
    <text evidence="2">Belongs to the FADH(2)-utilizing monooxygenase family.</text>
</comment>
<proteinExistence type="evidence at protein level"/>
<reference key="1">
    <citation type="journal article" date="1994" name="J. Biol. Chem.">
        <title>Molecular characterization of 4-hydroxyphenylacetate 3-hydroxylase of Escherichia coli. A two-protein component enzyme.</title>
        <authorList>
            <person name="Prieto M.A."/>
            <person name="Garcia J.L."/>
        </authorList>
    </citation>
    <scope>NUCLEOTIDE SEQUENCE [GENOMIC DNA]</scope>
    <scope>PROTEIN SEQUENCE OF 1-20</scope>
    <source>
        <strain>W / ATCC 11105 / DSM 1900 / 113-3</strain>
    </source>
</reference>
<reference key="2">
    <citation type="journal article" date="1996" name="J. Bacteriol.">
        <title>Molecular characterization of the 4-hydroxyphenylacetate catabolic pathway of Escherichia coli W: engineering a mobile aromatic degradative cluster.</title>
        <authorList>
            <person name="Prieto M.A."/>
            <person name="Diaz E."/>
            <person name="Garcia J.L."/>
        </authorList>
    </citation>
    <scope>NUCLEOTIDE SEQUENCE [GENOMIC DNA]</scope>
    <source>
        <strain>W / ATCC 11105 / DSM 1900 / 113-3</strain>
    </source>
</reference>
<reference key="3">
    <citation type="journal article" date="2000" name="Appl. Environ. Microbiol.">
        <title>Characterization of 4-hydroxyphenylacetate 3-hydroxylase (HpaB) of Escherichia coli as a reduced flavin adenine dinucleotide-utilizing monooxygenase.</title>
        <authorList>
            <person name="Xun L."/>
            <person name="Sandvik E.R."/>
        </authorList>
    </citation>
    <scope>FUNCTION</scope>
    <scope>CATALYTIC ACTIVITY</scope>
</reference>
<dbReference type="EC" id="1.14.14.9"/>
<dbReference type="EMBL" id="Z37980">
    <property type="protein sequence ID" value="CAA86048.1"/>
    <property type="molecule type" value="Genomic_DNA"/>
</dbReference>
<dbReference type="EMBL" id="Z29081">
    <property type="protein sequence ID" value="CAA82321.1"/>
    <property type="molecule type" value="Genomic_DNA"/>
</dbReference>
<dbReference type="PIR" id="B55349">
    <property type="entry name" value="B55349"/>
</dbReference>
<dbReference type="PDB" id="6QYH">
    <property type="method" value="X-ray"/>
    <property type="resolution" value="1.94 A"/>
    <property type="chains" value="A/B=1-520"/>
</dbReference>
<dbReference type="PDB" id="6QYI">
    <property type="method" value="X-ray"/>
    <property type="resolution" value="1.80 A"/>
    <property type="chains" value="A/B=1-520"/>
</dbReference>
<dbReference type="PDBsum" id="6QYH"/>
<dbReference type="PDBsum" id="6QYI"/>
<dbReference type="SMR" id="Q57160"/>
<dbReference type="STRING" id="585034.ECIAI1_4567"/>
<dbReference type="eggNOG" id="COG2368">
    <property type="taxonomic scope" value="Bacteria"/>
</dbReference>
<dbReference type="BioCyc" id="MetaCyc:MONOMER-2841"/>
<dbReference type="BRENDA" id="1.14.14.9">
    <property type="organism ID" value="2026"/>
</dbReference>
<dbReference type="UniPathway" id="UPA00208">
    <property type="reaction ID" value="UER00416"/>
</dbReference>
<dbReference type="GO" id="GO:0052881">
    <property type="term" value="F:4-hydroxyphenylacetate 3-monooxygenase activity"/>
    <property type="evidence" value="ECO:0007669"/>
    <property type="project" value="UniProtKB-EC"/>
</dbReference>
<dbReference type="GO" id="GO:0050660">
    <property type="term" value="F:flavin adenine dinucleotide binding"/>
    <property type="evidence" value="ECO:0007669"/>
    <property type="project" value="InterPro"/>
</dbReference>
<dbReference type="GO" id="GO:0016627">
    <property type="term" value="F:oxidoreductase activity, acting on the CH-CH group of donors"/>
    <property type="evidence" value="ECO:0007669"/>
    <property type="project" value="InterPro"/>
</dbReference>
<dbReference type="GO" id="GO:0010124">
    <property type="term" value="P:phenylacetate catabolic process"/>
    <property type="evidence" value="ECO:0007669"/>
    <property type="project" value="InterPro"/>
</dbReference>
<dbReference type="FunFam" id="1.10.3140.10:FF:000001">
    <property type="entry name" value="4-hydroxyphenylacetate 3-monooxygenase oxygenase component"/>
    <property type="match status" value="1"/>
</dbReference>
<dbReference type="FunFam" id="2.40.110.10:FF:000026">
    <property type="entry name" value="4-hydroxyphenylacetate 3-monooxygenase oxygenase component"/>
    <property type="match status" value="1"/>
</dbReference>
<dbReference type="Gene3D" id="1.10.3140.10">
    <property type="entry name" value="4-hydroxybutyryl-coa dehydratase, domain 1"/>
    <property type="match status" value="1"/>
</dbReference>
<dbReference type="Gene3D" id="2.40.110.10">
    <property type="entry name" value="Butyryl-CoA Dehydrogenase, subunit A, domain 2"/>
    <property type="match status" value="1"/>
</dbReference>
<dbReference type="Gene3D" id="1.20.140.10">
    <property type="entry name" value="Butyryl-CoA Dehydrogenase, subunit A, domain 3"/>
    <property type="match status" value="1"/>
</dbReference>
<dbReference type="InterPro" id="IPR046373">
    <property type="entry name" value="Acyl-CoA_Oxase/DH_mid-dom_sf"/>
</dbReference>
<dbReference type="InterPro" id="IPR036250">
    <property type="entry name" value="AcylCo_DH-like_C"/>
</dbReference>
<dbReference type="InterPro" id="IPR009100">
    <property type="entry name" value="AcylCoA_DH/oxidase_NM_dom_sf"/>
</dbReference>
<dbReference type="InterPro" id="IPR024677">
    <property type="entry name" value="HpaB/PvcC"/>
</dbReference>
<dbReference type="InterPro" id="IPR004925">
    <property type="entry name" value="HpaB/PvcC/4-BUDH"/>
</dbReference>
<dbReference type="InterPro" id="IPR024719">
    <property type="entry name" value="HpaB/PvcC/4-BUDH_C"/>
</dbReference>
<dbReference type="InterPro" id="IPR024674">
    <property type="entry name" value="HpaB/PvcC/4-BUDH_N"/>
</dbReference>
<dbReference type="InterPro" id="IPR012688">
    <property type="entry name" value="HpaB_gammaproteobact"/>
</dbReference>
<dbReference type="NCBIfam" id="TIGR02310">
    <property type="entry name" value="HpaB-2"/>
    <property type="match status" value="1"/>
</dbReference>
<dbReference type="PANTHER" id="PTHR36117">
    <property type="entry name" value="4-HYDROXYPHENYLACETATE 3-MONOOXYGENASE-RELATED"/>
    <property type="match status" value="1"/>
</dbReference>
<dbReference type="PANTHER" id="PTHR36117:SF3">
    <property type="entry name" value="4-HYDROXYPHENYLACETATE 3-MONOOXYGENASE-RELATED"/>
    <property type="match status" value="1"/>
</dbReference>
<dbReference type="Pfam" id="PF03241">
    <property type="entry name" value="HpaB"/>
    <property type="match status" value="1"/>
</dbReference>
<dbReference type="Pfam" id="PF11794">
    <property type="entry name" value="HpaB_N"/>
    <property type="match status" value="1"/>
</dbReference>
<dbReference type="PIRSF" id="PIRSF500125">
    <property type="entry name" value="4_HPA_large"/>
    <property type="match status" value="1"/>
</dbReference>
<dbReference type="PIRSF" id="PIRSF000331">
    <property type="entry name" value="HpaA_HpaB"/>
    <property type="match status" value="1"/>
</dbReference>
<dbReference type="SUPFAM" id="SSF47203">
    <property type="entry name" value="Acyl-CoA dehydrogenase C-terminal domain-like"/>
    <property type="match status" value="1"/>
</dbReference>
<dbReference type="SUPFAM" id="SSF56645">
    <property type="entry name" value="Acyl-CoA dehydrogenase NM domain-like"/>
    <property type="match status" value="1"/>
</dbReference>
<keyword id="KW-0002">3D-structure</keyword>
<keyword id="KW-0058">Aromatic hydrocarbons catabolism</keyword>
<keyword id="KW-0903">Direct protein sequencing</keyword>
<keyword id="KW-0274">FAD</keyword>
<keyword id="KW-0285">Flavoprotein</keyword>
<keyword id="KW-0503">Monooxygenase</keyword>
<keyword id="KW-0560">Oxidoreductase</keyword>
<protein>
    <recommendedName>
        <fullName>4-hydroxyphenylacetate 3-monooxygenase oxygenase component</fullName>
        <ecNumber>1.14.14.9</ecNumber>
    </recommendedName>
    <alternativeName>
        <fullName>4-HPA 3-hydroxylase</fullName>
    </alternativeName>
    <alternativeName>
        <fullName>4-HPA 3-monooxygenase large component</fullName>
    </alternativeName>
</protein>
<accession>Q57160</accession>
<feature type="chain" id="PRO_0000084032" description="4-hydroxyphenylacetate 3-monooxygenase oxygenase component">
    <location>
        <begin position="1"/>
        <end position="520"/>
    </location>
</feature>
<feature type="helix" evidence="3">
    <location>
        <begin position="3"/>
        <end position="6"/>
    </location>
</feature>
<feature type="strand" evidence="3">
    <location>
        <begin position="10"/>
        <end position="12"/>
    </location>
</feature>
<feature type="helix" evidence="3">
    <location>
        <begin position="16"/>
        <end position="22"/>
    </location>
</feature>
<feature type="strand" evidence="3">
    <location>
        <begin position="28"/>
        <end position="31"/>
    </location>
</feature>
<feature type="turn" evidence="3">
    <location>
        <begin position="39"/>
        <end position="41"/>
    </location>
</feature>
<feature type="turn" evidence="3">
    <location>
        <begin position="43"/>
        <end position="45"/>
    </location>
</feature>
<feature type="helix" evidence="3">
    <location>
        <begin position="46"/>
        <end position="58"/>
    </location>
</feature>
<feature type="helix" evidence="3">
    <location>
        <begin position="62"/>
        <end position="68"/>
    </location>
</feature>
<feature type="strand" evidence="3">
    <location>
        <begin position="69"/>
        <end position="71"/>
    </location>
</feature>
<feature type="strand" evidence="3">
    <location>
        <begin position="73"/>
        <end position="77"/>
    </location>
</feature>
<feature type="strand" evidence="3">
    <location>
        <begin position="79"/>
        <end position="81"/>
    </location>
</feature>
<feature type="helix" evidence="3">
    <location>
        <begin position="82"/>
        <end position="84"/>
    </location>
</feature>
<feature type="helix" evidence="3">
    <location>
        <begin position="90"/>
        <end position="105"/>
    </location>
</feature>
<feature type="turn" evidence="3">
    <location>
        <begin position="106"/>
        <end position="109"/>
    </location>
</feature>
<feature type="helix" evidence="3">
    <location>
        <begin position="116"/>
        <end position="127"/>
    </location>
</feature>
<feature type="helix" evidence="3">
    <location>
        <begin position="129"/>
        <end position="135"/>
    </location>
</feature>
<feature type="helix" evidence="3">
    <location>
        <begin position="136"/>
        <end position="149"/>
    </location>
</feature>
<feature type="strand" evidence="3">
    <location>
        <begin position="153"/>
        <end position="156"/>
    </location>
</feature>
<feature type="turn" evidence="3">
    <location>
        <begin position="172"/>
        <end position="174"/>
    </location>
</feature>
<feature type="strand" evidence="3">
    <location>
        <begin position="177"/>
        <end position="181"/>
    </location>
</feature>
<feature type="strand" evidence="3">
    <location>
        <begin position="183"/>
        <end position="196"/>
    </location>
</feature>
<feature type="helix" evidence="3">
    <location>
        <begin position="198"/>
        <end position="200"/>
    </location>
</feature>
<feature type="strand" evidence="3">
    <location>
        <begin position="202"/>
        <end position="207"/>
    </location>
</feature>
<feature type="helix" evidence="3">
    <location>
        <begin position="218"/>
        <end position="220"/>
    </location>
</feature>
<feature type="strand" evidence="3">
    <location>
        <begin position="222"/>
        <end position="227"/>
    </location>
</feature>
<feature type="strand" evidence="3">
    <location>
        <begin position="233"/>
        <end position="236"/>
    </location>
</feature>
<feature type="helix" evidence="3">
    <location>
        <begin position="241"/>
        <end position="248"/>
    </location>
</feature>
<feature type="turn" evidence="3">
    <location>
        <begin position="251"/>
        <end position="253"/>
    </location>
</feature>
<feature type="helix" evidence="3">
    <location>
        <begin position="257"/>
        <end position="260"/>
    </location>
</feature>
<feature type="strand" evidence="3">
    <location>
        <begin position="264"/>
        <end position="275"/>
    </location>
</feature>
<feature type="helix" evidence="3">
    <location>
        <begin position="276"/>
        <end position="278"/>
    </location>
</feature>
<feature type="strand" evidence="3">
    <location>
        <begin position="279"/>
        <end position="283"/>
    </location>
</feature>
<feature type="helix" evidence="3">
    <location>
        <begin position="285"/>
        <end position="294"/>
    </location>
</feature>
<feature type="helix" evidence="3">
    <location>
        <begin position="297"/>
        <end position="299"/>
    </location>
</feature>
<feature type="helix" evidence="3">
    <location>
        <begin position="301"/>
        <end position="327"/>
    </location>
</feature>
<feature type="helix" evidence="3">
    <location>
        <begin position="329"/>
        <end position="331"/>
    </location>
</feature>
<feature type="helix" evidence="3">
    <location>
        <begin position="333"/>
        <end position="358"/>
    </location>
</feature>
<feature type="helix" evidence="3">
    <location>
        <begin position="372"/>
        <end position="397"/>
    </location>
</feature>
<feature type="helix" evidence="3">
    <location>
        <begin position="398"/>
        <end position="401"/>
    </location>
</feature>
<feature type="helix" evidence="3">
    <location>
        <begin position="408"/>
        <end position="411"/>
    </location>
</feature>
<feature type="helix" evidence="3">
    <location>
        <begin position="414"/>
        <end position="423"/>
    </location>
</feature>
<feature type="helix" evidence="3">
    <location>
        <begin position="432"/>
        <end position="446"/>
    </location>
</feature>
<feature type="helix" evidence="3">
    <location>
        <begin position="449"/>
        <end position="460"/>
    </location>
</feature>
<feature type="helix" evidence="3">
    <location>
        <begin position="465"/>
        <end position="479"/>
    </location>
</feature>
<feature type="helix" evidence="3">
    <location>
        <begin position="481"/>
        <end position="494"/>
    </location>
</feature>
<feature type="strand" evidence="3">
    <location>
        <begin position="500"/>
        <end position="503"/>
    </location>
</feature>
<feature type="turn" evidence="3">
    <location>
        <begin position="510"/>
        <end position="512"/>
    </location>
</feature>
<feature type="helix" evidence="3">
    <location>
        <begin position="515"/>
        <end position="518"/>
    </location>
</feature>
<evidence type="ECO:0000269" key="1">
    <source>
    </source>
</evidence>
<evidence type="ECO:0000305" key="2"/>
<evidence type="ECO:0007829" key="3">
    <source>
        <dbReference type="PDB" id="6QYI"/>
    </source>
</evidence>
<gene>
    <name type="primary">hpaB</name>
</gene>